<feature type="chain" id="PRO_0000141175" description="Ribose-phosphate pyrophosphokinase">
    <location>
        <begin position="1"/>
        <end position="331"/>
    </location>
</feature>
<feature type="active site" evidence="1">
    <location>
        <position position="211"/>
    </location>
</feature>
<feature type="binding site" evidence="1">
    <location>
        <begin position="55"/>
        <end position="57"/>
    </location>
    <ligand>
        <name>ATP</name>
        <dbReference type="ChEBI" id="CHEBI:30616"/>
    </ligand>
</feature>
<feature type="binding site" evidence="1">
    <location>
        <position position="148"/>
    </location>
    <ligand>
        <name>Mg(2+)</name>
        <dbReference type="ChEBI" id="CHEBI:18420"/>
        <label>1</label>
    </ligand>
</feature>
<feature type="binding site" evidence="1">
    <location>
        <position position="187"/>
    </location>
    <ligand>
        <name>Mg(2+)</name>
        <dbReference type="ChEBI" id="CHEBI:18420"/>
        <label>2</label>
    </ligand>
</feature>
<feature type="binding site" evidence="1">
    <location>
        <position position="213"/>
    </location>
    <ligand>
        <name>D-ribose 5-phosphate</name>
        <dbReference type="ChEBI" id="CHEBI:78346"/>
    </ligand>
</feature>
<feature type="binding site" evidence="1">
    <location>
        <position position="237"/>
    </location>
    <ligand>
        <name>D-ribose 5-phosphate</name>
        <dbReference type="ChEBI" id="CHEBI:78346"/>
    </ligand>
</feature>
<feature type="binding site" evidence="1">
    <location>
        <begin position="241"/>
        <end position="245"/>
    </location>
    <ligand>
        <name>D-ribose 5-phosphate</name>
        <dbReference type="ChEBI" id="CHEBI:78346"/>
    </ligand>
</feature>
<proteinExistence type="inferred from homology"/>
<reference key="1">
    <citation type="journal article" date="2003" name="Nature">
        <title>Genome divergence in two Prochlorococcus ecotypes reflects oceanic niche differentiation.</title>
        <authorList>
            <person name="Rocap G."/>
            <person name="Larimer F.W."/>
            <person name="Lamerdin J.E."/>
            <person name="Malfatti S."/>
            <person name="Chain P."/>
            <person name="Ahlgren N.A."/>
            <person name="Arellano A."/>
            <person name="Coleman M."/>
            <person name="Hauser L."/>
            <person name="Hess W.R."/>
            <person name="Johnson Z.I."/>
            <person name="Land M.L."/>
            <person name="Lindell D."/>
            <person name="Post A.F."/>
            <person name="Regala W."/>
            <person name="Shah M."/>
            <person name="Shaw S.L."/>
            <person name="Steglich C."/>
            <person name="Sullivan M.B."/>
            <person name="Ting C.S."/>
            <person name="Tolonen A."/>
            <person name="Webb E.A."/>
            <person name="Zinser E.R."/>
            <person name="Chisholm S.W."/>
        </authorList>
    </citation>
    <scope>NUCLEOTIDE SEQUENCE [LARGE SCALE GENOMIC DNA]</scope>
    <source>
        <strain>CCMP1986 / NIES-2087 / MED4</strain>
    </source>
</reference>
<name>KPRS_PROMP</name>
<keyword id="KW-0067">ATP-binding</keyword>
<keyword id="KW-0963">Cytoplasm</keyword>
<keyword id="KW-0418">Kinase</keyword>
<keyword id="KW-0460">Magnesium</keyword>
<keyword id="KW-0479">Metal-binding</keyword>
<keyword id="KW-0545">Nucleotide biosynthesis</keyword>
<keyword id="KW-0547">Nucleotide-binding</keyword>
<keyword id="KW-0808">Transferase</keyword>
<sequence length="331" mass="36253">MTSFITAVDNEEPTFNLTNSRLRLVSGTSNPKLAEEIASYLGIENVPLVSKRFADGELYVQIQQSIRGCDVFLIQPTCAPVNDSLMELMIMVDACKRASARQITAVIPYFGYARADRKTSGRESITAKLTANLLEKSGVDRVLAMDLHSAQIQGYFDIPCDHIYGSPVLIDYLESLKLEEVVVVSPDVGGVARARAFAKLMSDAPLAIIDKRRSAHNIAESLTVIGEVKGKTAILIDDMIDTGGTICSGANLLKKEGAKRIFACASHAVFSPPSYERLSSKDLFEQVIVTNSIPVIDNYEFPQLKVLSVANMLGEAIWRIHEESSVSSMFR</sequence>
<evidence type="ECO:0000255" key="1">
    <source>
        <dbReference type="HAMAP-Rule" id="MF_00583"/>
    </source>
</evidence>
<gene>
    <name evidence="1" type="primary">prs</name>
    <name type="ordered locus">PMM1080</name>
</gene>
<accession>Q7V111</accession>
<protein>
    <recommendedName>
        <fullName evidence="1">Ribose-phosphate pyrophosphokinase</fullName>
        <shortName evidence="1">RPPK</shortName>
        <ecNumber evidence="1">2.7.6.1</ecNumber>
    </recommendedName>
    <alternativeName>
        <fullName evidence="1">5-phospho-D-ribosyl alpha-1-diphosphate synthase</fullName>
    </alternativeName>
    <alternativeName>
        <fullName evidence="1">Phosphoribosyl diphosphate synthase</fullName>
    </alternativeName>
    <alternativeName>
        <fullName evidence="1">Phosphoribosyl pyrophosphate synthase</fullName>
        <shortName evidence="1">P-Rib-PP synthase</shortName>
        <shortName evidence="1">PRPP synthase</shortName>
        <shortName evidence="1">PRPPase</shortName>
    </alternativeName>
</protein>
<comment type="function">
    <text evidence="1">Involved in the biosynthesis of the central metabolite phospho-alpha-D-ribosyl-1-pyrophosphate (PRPP) via the transfer of pyrophosphoryl group from ATP to 1-hydroxyl of ribose-5-phosphate (Rib-5-P).</text>
</comment>
<comment type="catalytic activity">
    <reaction evidence="1">
        <text>D-ribose 5-phosphate + ATP = 5-phospho-alpha-D-ribose 1-diphosphate + AMP + H(+)</text>
        <dbReference type="Rhea" id="RHEA:15609"/>
        <dbReference type="ChEBI" id="CHEBI:15378"/>
        <dbReference type="ChEBI" id="CHEBI:30616"/>
        <dbReference type="ChEBI" id="CHEBI:58017"/>
        <dbReference type="ChEBI" id="CHEBI:78346"/>
        <dbReference type="ChEBI" id="CHEBI:456215"/>
        <dbReference type="EC" id="2.7.6.1"/>
    </reaction>
</comment>
<comment type="cofactor">
    <cofactor evidence="1">
        <name>Mg(2+)</name>
        <dbReference type="ChEBI" id="CHEBI:18420"/>
    </cofactor>
    <text evidence="1">Binds 2 Mg(2+) ions per subunit.</text>
</comment>
<comment type="pathway">
    <text evidence="1">Metabolic intermediate biosynthesis; 5-phospho-alpha-D-ribose 1-diphosphate biosynthesis; 5-phospho-alpha-D-ribose 1-diphosphate from D-ribose 5-phosphate (route I): step 1/1.</text>
</comment>
<comment type="subunit">
    <text evidence="1">Homohexamer.</text>
</comment>
<comment type="subcellular location">
    <subcellularLocation>
        <location evidence="1">Cytoplasm</location>
    </subcellularLocation>
</comment>
<comment type="similarity">
    <text evidence="1">Belongs to the ribose-phosphate pyrophosphokinase family. Class I subfamily.</text>
</comment>
<organism>
    <name type="scientific">Prochlorococcus marinus subsp. pastoris (strain CCMP1986 / NIES-2087 / MED4)</name>
    <dbReference type="NCBI Taxonomy" id="59919"/>
    <lineage>
        <taxon>Bacteria</taxon>
        <taxon>Bacillati</taxon>
        <taxon>Cyanobacteriota</taxon>
        <taxon>Cyanophyceae</taxon>
        <taxon>Synechococcales</taxon>
        <taxon>Prochlorococcaceae</taxon>
        <taxon>Prochlorococcus</taxon>
    </lineage>
</organism>
<dbReference type="EC" id="2.7.6.1" evidence="1"/>
<dbReference type="EMBL" id="BX548174">
    <property type="protein sequence ID" value="CAE19539.1"/>
    <property type="molecule type" value="Genomic_DNA"/>
</dbReference>
<dbReference type="RefSeq" id="WP_011132713.1">
    <property type="nucleotide sequence ID" value="NC_005072.1"/>
</dbReference>
<dbReference type="SMR" id="Q7V111"/>
<dbReference type="STRING" id="59919.PMM1080"/>
<dbReference type="KEGG" id="pmm:PMM1080"/>
<dbReference type="eggNOG" id="COG0462">
    <property type="taxonomic scope" value="Bacteria"/>
</dbReference>
<dbReference type="HOGENOM" id="CLU_033546_7_0_3"/>
<dbReference type="OrthoDB" id="9777067at2"/>
<dbReference type="UniPathway" id="UPA00087">
    <property type="reaction ID" value="UER00172"/>
</dbReference>
<dbReference type="Proteomes" id="UP000001026">
    <property type="component" value="Chromosome"/>
</dbReference>
<dbReference type="GO" id="GO:0005737">
    <property type="term" value="C:cytoplasm"/>
    <property type="evidence" value="ECO:0007669"/>
    <property type="project" value="UniProtKB-SubCell"/>
</dbReference>
<dbReference type="GO" id="GO:0002189">
    <property type="term" value="C:ribose phosphate diphosphokinase complex"/>
    <property type="evidence" value="ECO:0007669"/>
    <property type="project" value="TreeGrafter"/>
</dbReference>
<dbReference type="GO" id="GO:0005524">
    <property type="term" value="F:ATP binding"/>
    <property type="evidence" value="ECO:0007669"/>
    <property type="project" value="UniProtKB-KW"/>
</dbReference>
<dbReference type="GO" id="GO:0016301">
    <property type="term" value="F:kinase activity"/>
    <property type="evidence" value="ECO:0007669"/>
    <property type="project" value="UniProtKB-KW"/>
</dbReference>
<dbReference type="GO" id="GO:0000287">
    <property type="term" value="F:magnesium ion binding"/>
    <property type="evidence" value="ECO:0007669"/>
    <property type="project" value="UniProtKB-UniRule"/>
</dbReference>
<dbReference type="GO" id="GO:0004749">
    <property type="term" value="F:ribose phosphate diphosphokinase activity"/>
    <property type="evidence" value="ECO:0007669"/>
    <property type="project" value="UniProtKB-UniRule"/>
</dbReference>
<dbReference type="GO" id="GO:0006015">
    <property type="term" value="P:5-phosphoribose 1-diphosphate biosynthetic process"/>
    <property type="evidence" value="ECO:0007669"/>
    <property type="project" value="UniProtKB-UniRule"/>
</dbReference>
<dbReference type="GO" id="GO:0006164">
    <property type="term" value="P:purine nucleotide biosynthetic process"/>
    <property type="evidence" value="ECO:0007669"/>
    <property type="project" value="TreeGrafter"/>
</dbReference>
<dbReference type="GO" id="GO:0009156">
    <property type="term" value="P:ribonucleoside monophosphate biosynthetic process"/>
    <property type="evidence" value="ECO:0007669"/>
    <property type="project" value="InterPro"/>
</dbReference>
<dbReference type="CDD" id="cd06223">
    <property type="entry name" value="PRTases_typeI"/>
    <property type="match status" value="1"/>
</dbReference>
<dbReference type="FunFam" id="3.40.50.2020:FF:000002">
    <property type="entry name" value="Ribose-phosphate pyrophosphokinase"/>
    <property type="match status" value="1"/>
</dbReference>
<dbReference type="FunFam" id="3.40.50.2020:FF:000014">
    <property type="entry name" value="Ribose-phosphate pyrophosphokinase 1"/>
    <property type="match status" value="1"/>
</dbReference>
<dbReference type="Gene3D" id="3.40.50.2020">
    <property type="match status" value="2"/>
</dbReference>
<dbReference type="HAMAP" id="MF_00583_B">
    <property type="entry name" value="RibP_PPkinase_B"/>
    <property type="match status" value="1"/>
</dbReference>
<dbReference type="InterPro" id="IPR000842">
    <property type="entry name" value="PRib_PP_synth_CS"/>
</dbReference>
<dbReference type="InterPro" id="IPR029099">
    <property type="entry name" value="Pribosyltran_N"/>
</dbReference>
<dbReference type="InterPro" id="IPR000836">
    <property type="entry name" value="PRibTrfase_dom"/>
</dbReference>
<dbReference type="InterPro" id="IPR029057">
    <property type="entry name" value="PRTase-like"/>
</dbReference>
<dbReference type="InterPro" id="IPR005946">
    <property type="entry name" value="Rib-P_diPkinase"/>
</dbReference>
<dbReference type="InterPro" id="IPR037515">
    <property type="entry name" value="Rib-P_diPkinase_bac"/>
</dbReference>
<dbReference type="NCBIfam" id="NF002320">
    <property type="entry name" value="PRK01259.1"/>
    <property type="match status" value="1"/>
</dbReference>
<dbReference type="NCBIfam" id="NF002758">
    <property type="entry name" value="PRK02812.1"/>
    <property type="match status" value="1"/>
</dbReference>
<dbReference type="NCBIfam" id="TIGR01251">
    <property type="entry name" value="ribP_PPkin"/>
    <property type="match status" value="1"/>
</dbReference>
<dbReference type="PANTHER" id="PTHR10210">
    <property type="entry name" value="RIBOSE-PHOSPHATE DIPHOSPHOKINASE FAMILY MEMBER"/>
    <property type="match status" value="1"/>
</dbReference>
<dbReference type="PANTHER" id="PTHR10210:SF41">
    <property type="entry name" value="RIBOSE-PHOSPHATE PYROPHOSPHOKINASE 1, CHLOROPLASTIC"/>
    <property type="match status" value="1"/>
</dbReference>
<dbReference type="Pfam" id="PF14572">
    <property type="entry name" value="Pribosyl_synth"/>
    <property type="match status" value="1"/>
</dbReference>
<dbReference type="Pfam" id="PF13793">
    <property type="entry name" value="Pribosyltran_N"/>
    <property type="match status" value="1"/>
</dbReference>
<dbReference type="SMART" id="SM01400">
    <property type="entry name" value="Pribosyltran_N"/>
    <property type="match status" value="1"/>
</dbReference>
<dbReference type="SUPFAM" id="SSF53271">
    <property type="entry name" value="PRTase-like"/>
    <property type="match status" value="1"/>
</dbReference>
<dbReference type="PROSITE" id="PS00114">
    <property type="entry name" value="PRPP_SYNTHASE"/>
    <property type="match status" value="1"/>
</dbReference>